<accession>Q9WTI7</accession>
<accession>O08571</accession>
<accession>O08834</accession>
<accession>Q3TBQ4</accession>
<accession>Q3U231</accession>
<accession>Q5ND46</accession>
<accession>Q5ND48</accession>
<accession>Q5ND49</accession>
<accession>Q9ERB6</accession>
<accession>Q9QW54</accession>
<reference key="1">
    <citation type="journal article" date="1997" name="Neuron">
        <title>The vibrator mutation causes neurodegeneration via reduced expression of PITP alpha: positional complementation cloning and extragenic suppression.</title>
        <authorList>
            <person name="Hamilton B.A."/>
            <person name="Smith D.J."/>
            <person name="Mueller K.L."/>
            <person name="Kerrebrock A.W."/>
            <person name="Bronson R.T."/>
            <person name="van Berkel V."/>
            <person name="Daly M.J."/>
            <person name="Kruglyak L."/>
            <person name="Reeve M.P."/>
            <person name="Nemhauser J.L."/>
            <person name="Hawkins T.L."/>
            <person name="Rubin E.M."/>
            <person name="Lander E.S."/>
        </authorList>
    </citation>
    <scope>NUCLEOTIDE SEQUENCE [GENOMIC DNA / MRNA] (ISOFORMS 2 AND 4)</scope>
    <source>
        <strain>DBA/2J</strain>
        <tissue>Brain</tissue>
    </source>
</reference>
<reference key="2">
    <citation type="journal article" date="2000" name="Science">
        <title>A myosin I isoform in the nucleus.</title>
        <authorList>
            <person name="Pestic-Dragovich L."/>
            <person name="Stojiljkovic L."/>
            <person name="Philimonenko A.A."/>
            <person name="Nowak G."/>
            <person name="Ke Y."/>
            <person name="Settlage R.E."/>
            <person name="Shabanowitz J."/>
            <person name="Hunt D.F."/>
            <person name="Hozak P."/>
            <person name="de Lanerolle P."/>
        </authorList>
    </citation>
    <scope>NUCLEOTIDE SEQUENCE [MRNA] (ISOFORM 3)</scope>
    <scope>INTERACTION WITH POLR2A</scope>
    <scope>SUBCELLULAR LOCATION</scope>
    <source>
        <tissue>Embryo</tissue>
    </source>
</reference>
<reference key="3">
    <citation type="journal article" date="2005" name="Science">
        <title>The transcriptional landscape of the mammalian genome.</title>
        <authorList>
            <person name="Carninci P."/>
            <person name="Kasukawa T."/>
            <person name="Katayama S."/>
            <person name="Gough J."/>
            <person name="Frith M.C."/>
            <person name="Maeda N."/>
            <person name="Oyama R."/>
            <person name="Ravasi T."/>
            <person name="Lenhard B."/>
            <person name="Wells C."/>
            <person name="Kodzius R."/>
            <person name="Shimokawa K."/>
            <person name="Bajic V.B."/>
            <person name="Brenner S.E."/>
            <person name="Batalov S."/>
            <person name="Forrest A.R."/>
            <person name="Zavolan M."/>
            <person name="Davis M.J."/>
            <person name="Wilming L.G."/>
            <person name="Aidinis V."/>
            <person name="Allen J.E."/>
            <person name="Ambesi-Impiombato A."/>
            <person name="Apweiler R."/>
            <person name="Aturaliya R.N."/>
            <person name="Bailey T.L."/>
            <person name="Bansal M."/>
            <person name="Baxter L."/>
            <person name="Beisel K.W."/>
            <person name="Bersano T."/>
            <person name="Bono H."/>
            <person name="Chalk A.M."/>
            <person name="Chiu K.P."/>
            <person name="Choudhary V."/>
            <person name="Christoffels A."/>
            <person name="Clutterbuck D.R."/>
            <person name="Crowe M.L."/>
            <person name="Dalla E."/>
            <person name="Dalrymple B.P."/>
            <person name="de Bono B."/>
            <person name="Della Gatta G."/>
            <person name="di Bernardo D."/>
            <person name="Down T."/>
            <person name="Engstrom P."/>
            <person name="Fagiolini M."/>
            <person name="Faulkner G."/>
            <person name="Fletcher C.F."/>
            <person name="Fukushima T."/>
            <person name="Furuno M."/>
            <person name="Futaki S."/>
            <person name="Gariboldi M."/>
            <person name="Georgii-Hemming P."/>
            <person name="Gingeras T.R."/>
            <person name="Gojobori T."/>
            <person name="Green R.E."/>
            <person name="Gustincich S."/>
            <person name="Harbers M."/>
            <person name="Hayashi Y."/>
            <person name="Hensch T.K."/>
            <person name="Hirokawa N."/>
            <person name="Hill D."/>
            <person name="Huminiecki L."/>
            <person name="Iacono M."/>
            <person name="Ikeo K."/>
            <person name="Iwama A."/>
            <person name="Ishikawa T."/>
            <person name="Jakt M."/>
            <person name="Kanapin A."/>
            <person name="Katoh M."/>
            <person name="Kawasawa Y."/>
            <person name="Kelso J."/>
            <person name="Kitamura H."/>
            <person name="Kitano H."/>
            <person name="Kollias G."/>
            <person name="Krishnan S.P."/>
            <person name="Kruger A."/>
            <person name="Kummerfeld S.K."/>
            <person name="Kurochkin I.V."/>
            <person name="Lareau L.F."/>
            <person name="Lazarevic D."/>
            <person name="Lipovich L."/>
            <person name="Liu J."/>
            <person name="Liuni S."/>
            <person name="McWilliam S."/>
            <person name="Madan Babu M."/>
            <person name="Madera M."/>
            <person name="Marchionni L."/>
            <person name="Matsuda H."/>
            <person name="Matsuzawa S."/>
            <person name="Miki H."/>
            <person name="Mignone F."/>
            <person name="Miyake S."/>
            <person name="Morris K."/>
            <person name="Mottagui-Tabar S."/>
            <person name="Mulder N."/>
            <person name="Nakano N."/>
            <person name="Nakauchi H."/>
            <person name="Ng P."/>
            <person name="Nilsson R."/>
            <person name="Nishiguchi S."/>
            <person name="Nishikawa S."/>
            <person name="Nori F."/>
            <person name="Ohara O."/>
            <person name="Okazaki Y."/>
            <person name="Orlando V."/>
            <person name="Pang K.C."/>
            <person name="Pavan W.J."/>
            <person name="Pavesi G."/>
            <person name="Pesole G."/>
            <person name="Petrovsky N."/>
            <person name="Piazza S."/>
            <person name="Reed J."/>
            <person name="Reid J.F."/>
            <person name="Ring B.Z."/>
            <person name="Ringwald M."/>
            <person name="Rost B."/>
            <person name="Ruan Y."/>
            <person name="Salzberg S.L."/>
            <person name="Sandelin A."/>
            <person name="Schneider C."/>
            <person name="Schoenbach C."/>
            <person name="Sekiguchi K."/>
            <person name="Semple C.A."/>
            <person name="Seno S."/>
            <person name="Sessa L."/>
            <person name="Sheng Y."/>
            <person name="Shibata Y."/>
            <person name="Shimada H."/>
            <person name="Shimada K."/>
            <person name="Silva D."/>
            <person name="Sinclair B."/>
            <person name="Sperling S."/>
            <person name="Stupka E."/>
            <person name="Sugiura K."/>
            <person name="Sultana R."/>
            <person name="Takenaka Y."/>
            <person name="Taki K."/>
            <person name="Tammoja K."/>
            <person name="Tan S.L."/>
            <person name="Tang S."/>
            <person name="Taylor M.S."/>
            <person name="Tegner J."/>
            <person name="Teichmann S.A."/>
            <person name="Ueda H.R."/>
            <person name="van Nimwegen E."/>
            <person name="Verardo R."/>
            <person name="Wei C.L."/>
            <person name="Yagi K."/>
            <person name="Yamanishi H."/>
            <person name="Zabarovsky E."/>
            <person name="Zhu S."/>
            <person name="Zimmer A."/>
            <person name="Hide W."/>
            <person name="Bult C."/>
            <person name="Grimmond S.M."/>
            <person name="Teasdale R.D."/>
            <person name="Liu E.T."/>
            <person name="Brusic V."/>
            <person name="Quackenbush J."/>
            <person name="Wahlestedt C."/>
            <person name="Mattick J.S."/>
            <person name="Hume D.A."/>
            <person name="Kai C."/>
            <person name="Sasaki D."/>
            <person name="Tomaru Y."/>
            <person name="Fukuda S."/>
            <person name="Kanamori-Katayama M."/>
            <person name="Suzuki M."/>
            <person name="Aoki J."/>
            <person name="Arakawa T."/>
            <person name="Iida J."/>
            <person name="Imamura K."/>
            <person name="Itoh M."/>
            <person name="Kato T."/>
            <person name="Kawaji H."/>
            <person name="Kawagashira N."/>
            <person name="Kawashima T."/>
            <person name="Kojima M."/>
            <person name="Kondo S."/>
            <person name="Konno H."/>
            <person name="Nakano K."/>
            <person name="Ninomiya N."/>
            <person name="Nishio T."/>
            <person name="Okada M."/>
            <person name="Plessy C."/>
            <person name="Shibata K."/>
            <person name="Shiraki T."/>
            <person name="Suzuki S."/>
            <person name="Tagami M."/>
            <person name="Waki K."/>
            <person name="Watahiki A."/>
            <person name="Okamura-Oho Y."/>
            <person name="Suzuki H."/>
            <person name="Kawai J."/>
            <person name="Hayashizaki Y."/>
        </authorList>
    </citation>
    <scope>NUCLEOTIDE SEQUENCE [LARGE SCALE MRNA] (ISOFORMS 2 AND 3)</scope>
    <source>
        <strain>C57BL/6J</strain>
        <strain>NOD</strain>
        <tissue>Lung</tissue>
    </source>
</reference>
<reference key="4">
    <citation type="journal article" date="2009" name="PLoS Biol.">
        <title>Lineage-specific biology revealed by a finished genome assembly of the mouse.</title>
        <authorList>
            <person name="Church D.M."/>
            <person name="Goodstadt L."/>
            <person name="Hillier L.W."/>
            <person name="Zody M.C."/>
            <person name="Goldstein S."/>
            <person name="She X."/>
            <person name="Bult C.J."/>
            <person name="Agarwala R."/>
            <person name="Cherry J.L."/>
            <person name="DiCuccio M."/>
            <person name="Hlavina W."/>
            <person name="Kapustin Y."/>
            <person name="Meric P."/>
            <person name="Maglott D."/>
            <person name="Birtle Z."/>
            <person name="Marques A.C."/>
            <person name="Graves T."/>
            <person name="Zhou S."/>
            <person name="Teague B."/>
            <person name="Potamousis K."/>
            <person name="Churas C."/>
            <person name="Place M."/>
            <person name="Herschleb J."/>
            <person name="Runnheim R."/>
            <person name="Forrest D."/>
            <person name="Amos-Landgraf J."/>
            <person name="Schwartz D.C."/>
            <person name="Cheng Z."/>
            <person name="Lindblad-Toh K."/>
            <person name="Eichler E.E."/>
            <person name="Ponting C.P."/>
        </authorList>
    </citation>
    <scope>NUCLEOTIDE SEQUENCE [LARGE SCALE GENOMIC DNA]</scope>
    <source>
        <strain>C57BL/6J</strain>
    </source>
</reference>
<reference key="5">
    <citation type="submission" date="2007-06" db="EMBL/GenBank/DDBJ databases">
        <authorList>
            <person name="Mural R.J."/>
            <person name="Adams M.D."/>
            <person name="Myers E.W."/>
            <person name="Smith H.O."/>
            <person name="Venter J.C."/>
        </authorList>
    </citation>
    <scope>NUCLEOTIDE SEQUENCE [LARGE SCALE GENOMIC DNA]</scope>
</reference>
<reference key="6">
    <citation type="journal article" date="2004" name="Genome Res.">
        <title>The status, quality, and expansion of the NIH full-length cDNA project: the Mammalian Gene Collection (MGC).</title>
        <authorList>
            <consortium name="The MGC Project Team"/>
        </authorList>
    </citation>
    <scope>NUCLEOTIDE SEQUENCE [LARGE SCALE MRNA] (ISOFORM 2)</scope>
    <source>
        <strain>FVB/N</strain>
        <tissue>Mammary gland</tissue>
    </source>
</reference>
<reference key="7">
    <citation type="journal article" date="1997" name="Genomics">
        <title>Cloning of the genes encoding two murine and human cochlear unconventional type I myosins.</title>
        <authorList>
            <person name="Crozet F."/>
            <person name="El-Amraoui A."/>
            <person name="Blanchard S."/>
            <person name="Lenoir M."/>
            <person name="Ripoll C."/>
            <person name="Vago P."/>
            <person name="Hamel C."/>
            <person name="Fizames C."/>
            <person name="Levi-Acobas F."/>
            <person name="Depetris D."/>
            <person name="Mattei M.-G."/>
            <person name="Weil D."/>
            <person name="Pujol R."/>
            <person name="Petit C."/>
        </authorList>
    </citation>
    <scope>NUCLEOTIDE SEQUENCE [MRNA] OF 1-842 (ISOFORM 2)</scope>
    <scope>TISSUE SPECIFICITY</scope>
    <source>
        <strain>BALB/cJ</strain>
        <tissue>Cochlea</tissue>
    </source>
</reference>
<reference key="8">
    <citation type="submission" date="2008-09" db="EMBL/GenBank/DDBJ databases">
        <authorList>
            <person name="Gerhard D.S."/>
        </authorList>
    </citation>
    <scope>NUCLEOTIDE SEQUENCE [LARGE SCALE MRNA] OF 1-34 (ISOFORM 1)</scope>
    <source>
        <tissue>Placenta</tissue>
    </source>
</reference>
<reference key="9">
    <citation type="journal article" date="1993" name="J. Cell Biol.">
        <title>Mammalian myosin I alpha, I beta, and I gamma: new widely expressed genes of the myosin I family.</title>
        <authorList>
            <person name="Sherr E.H."/>
            <person name="Joyce M.P."/>
            <person name="Greene L.A."/>
        </authorList>
    </citation>
    <scope>NUCLEOTIDE SEQUENCE [MRNA] OF 181-628 (ISOFORM 1/2/3/4)</scope>
</reference>
<reference key="10">
    <citation type="journal article" date="2002" name="Cell">
        <title>A chemical-genetic strategy implicates myosin-1c in adaptation by hair cells.</title>
        <authorList>
            <person name="Holt J.R."/>
            <person name="Gillespie S.K."/>
            <person name="Provance D.W."/>
            <person name="Shah K."/>
            <person name="Shokat K.M."/>
            <person name="Corey D.P."/>
            <person name="Mercer J.A."/>
            <person name="Gillespie P.G."/>
        </authorList>
    </citation>
    <scope>FUNCTION</scope>
</reference>
<reference key="11">
    <citation type="journal article" date="2002" name="Nature">
        <title>Glucose transporter recycling in response to insulin is facilitated by myosin Myo1c.</title>
        <authorList>
            <person name="Bose A."/>
            <person name="Guilherme A."/>
            <person name="Robida S.I."/>
            <person name="Nicoloro S.M."/>
            <person name="Zhou Q.L."/>
            <person name="Jiang Z.Y."/>
            <person name="Pomerleau D.P."/>
            <person name="Czech M.P."/>
        </authorList>
    </citation>
    <scope>FUNCTION</scope>
    <scope>SUBCELLULAR LOCATION</scope>
    <scope>TISSUE SPECIFICITY</scope>
</reference>
<reference key="12">
    <citation type="journal article" date="2004" name="EMBO J.">
        <title>Myo1c is designed for the adaptation response in the inner ear.</title>
        <authorList>
            <person name="Batters C."/>
            <person name="Arthur C.P."/>
            <person name="Lin A."/>
            <person name="Porter J."/>
            <person name="Geeves M.A."/>
            <person name="Milligan R.A."/>
            <person name="Molloy J.E."/>
            <person name="Coluccio L.M."/>
        </authorList>
    </citation>
    <scope>FUNCTION</scope>
</reference>
<reference key="13">
    <citation type="journal article" date="2004" name="Exp. Cell Res.">
        <title>An actin-myosin complex on actively transcribing genes.</title>
        <authorList>
            <person name="Fomproix N."/>
            <person name="Percipalle P."/>
        </authorList>
    </citation>
    <scope>FUNCTION</scope>
</reference>
<reference key="14">
    <citation type="journal article" date="2005" name="J. Cell Sci.">
        <title>PHR1, an integral membrane protein of the inner ear sensory cells, directly interacts with myosin 1c and myosin VIIa.</title>
        <authorList>
            <person name="Etournay R."/>
            <person name="El-Amraoui A."/>
            <person name="Bahloul A."/>
            <person name="Blanchard S."/>
            <person name="Roux I."/>
            <person name="Pezeron G."/>
            <person name="Michalski N."/>
            <person name="Daviet L."/>
            <person name="Hardelin J.-P."/>
            <person name="Legrain P."/>
            <person name="Petit C."/>
        </authorList>
    </citation>
    <scope>INTERACTION WITH PLEKHB1</scope>
</reference>
<reference key="15">
    <citation type="journal article" date="2005" name="Neuron">
        <title>Fast adaptation in vestibular hair cells requires myosin-1c activity.</title>
        <authorList>
            <person name="Stauffer E.A."/>
            <person name="Scarborough J.D."/>
            <person name="Hirono M."/>
            <person name="Miller E.D."/>
            <person name="Shah K."/>
            <person name="Mercer J.A."/>
            <person name="Holt J.R."/>
            <person name="Gillespie P.G."/>
        </authorList>
    </citation>
    <scope>FUNCTION</scope>
    <scope>TISSUE SPECIFICITY</scope>
</reference>
<reference key="16">
    <citation type="journal article" date="2006" name="EMBO Rep.">
        <title>The chromatin remodelling complex WSTF-SNF2h interacts with nuclear myosin 1 and has a role in RNA polymerase I transcription.</title>
        <authorList>
            <person name="Percipalle P."/>
            <person name="Fomproix N."/>
            <person name="Cavellan E."/>
            <person name="Voit R."/>
            <person name="Reimer G."/>
            <person name="Krueger T."/>
            <person name="Thyberg J."/>
            <person name="Scheer U."/>
            <person name="Grummt I."/>
            <person name="Oestlund Farrants A.-K.O."/>
        </authorList>
    </citation>
    <scope>FUNCTION (ISOFORM 3)</scope>
    <scope>INTERACTION WITH BAZ1B</scope>
    <scope>POLR1A AND SMARCA5</scope>
    <scope>SUBCELLULAR LOCATION (ISOFORM 3)</scope>
</reference>
<reference key="17">
    <citation type="journal article" date="2006" name="J. Cell. Biochem.">
        <title>Nuclear myosin I is necessary for the formation of the first phosphodiester bond during transcription initiation by RNA polymerase II.</title>
        <authorList>
            <person name="Hofmann W.A."/>
            <person name="Vargas G.M."/>
            <person name="Ramchandran R."/>
            <person name="Stojiljkovic L."/>
            <person name="Goodrich J.A."/>
            <person name="de Lanerolle P."/>
        </authorList>
    </citation>
    <scope>FUNCTION</scope>
    <scope>INTERACTION WITH POLR2A</scope>
</reference>
<reference key="18">
    <citation type="journal article" date="2006" name="Mol. Biol. Cell">
        <title>Myo1c binds phosphoinositides through a putative pleckstrin homology domain.</title>
        <authorList>
            <person name="Hokanson D.E."/>
            <person name="Laakso J.M."/>
            <person name="Lin T."/>
            <person name="Sept D."/>
            <person name="Ostap E.M."/>
        </authorList>
    </citation>
    <scope>FUNCTION</scope>
    <scope>MUTAGENESIS OF LYS-927 AND ARG-938</scope>
</reference>
<reference key="19">
    <citation type="journal article" date="2006" name="Proc. Natl. Acad. Sci. U.S.A.">
        <title>Myo1c binds tightly and specifically to phosphatidylinositol 4,5-bisphosphate and inositol 1,4,5-trisphosphate.</title>
        <authorList>
            <person name="Hokanson D.E."/>
            <person name="Ostap E.M."/>
        </authorList>
    </citation>
    <scope>FUNCTION</scope>
    <scope>SUBCELLULAR LOCATION</scope>
</reference>
<reference key="20">
    <citation type="journal article" date="2007" name="Histochem. Cell Biol.">
        <title>Nuclear myosin is ubiquitously expressed and evolutionary conserved in vertebrates.</title>
        <authorList>
            <person name="Kahle M."/>
            <person name="Pridalova J."/>
            <person name="Spacek M."/>
            <person name="Dzijak R."/>
            <person name="Hozak P."/>
        </authorList>
    </citation>
    <scope>INDUCTION</scope>
    <scope>SUBCELLULAR LOCATION (ISOFORM 3)</scope>
    <scope>TISSUE SPECIFICITY</scope>
</reference>
<reference key="21">
    <citation type="journal article" date="2007" name="J. Muscle Res. Cell Motil.">
        <title>CIB1 and CaBP1 bind to the myo1c regulatory domain.</title>
        <authorList>
            <person name="Tang N."/>
            <person name="Lin T."/>
            <person name="Yang J."/>
            <person name="Foskett J.K."/>
            <person name="Ostap E.M."/>
        </authorList>
    </citation>
    <scope>INTERACTION WITH CABP1 AND CIB1</scope>
    <scope>SUBCELLULAR LOCATION</scope>
</reference>
<reference key="22">
    <citation type="journal article" date="2010" name="Cell">
        <title>A tissue-specific atlas of mouse protein phosphorylation and expression.</title>
        <authorList>
            <person name="Huttlin E.L."/>
            <person name="Jedrychowski M.P."/>
            <person name="Elias J.E."/>
            <person name="Goswami T."/>
            <person name="Rad R."/>
            <person name="Beausoleil S.A."/>
            <person name="Villen J."/>
            <person name="Haas W."/>
            <person name="Sowa M.E."/>
            <person name="Gygi S.P."/>
        </authorList>
    </citation>
    <scope>PHOSPHORYLATION [LARGE SCALE ANALYSIS] AT SER-10 (ISOFORM 3)</scope>
    <scope>IDENTIFICATION BY MASS SPECTROMETRY [LARGE SCALE ANALYSIS]</scope>
    <source>
        <tissue>Brown adipose tissue</tissue>
        <tissue>Heart</tissue>
        <tissue>Kidney</tissue>
        <tissue>Liver</tissue>
        <tissue>Lung</tissue>
        <tissue>Pancreas</tissue>
        <tissue>Spleen</tissue>
        <tissue>Testis</tissue>
    </source>
</reference>
<reference key="23">
    <citation type="journal article" date="2012" name="Mol. Biol. Cell">
        <title>Myo1c binding to submembrane actin mediates insulin-induced tethering of GLUT4 vesicles.</title>
        <authorList>
            <person name="Boguslavsky S."/>
            <person name="Chiu T."/>
            <person name="Foley K.P."/>
            <person name="Osorio-Fuentealba C."/>
            <person name="Antonescu C.N."/>
            <person name="Bayer K.U."/>
            <person name="Bilan P.J."/>
            <person name="Klip A."/>
        </authorList>
    </citation>
    <scope>FUNCTION</scope>
    <scope>SUBCELLULAR LOCATION</scope>
    <scope>INTERACTION WITH GLUT4</scope>
    <scope>ACTIN-BINDING</scope>
</reference>
<reference key="24">
    <citation type="journal article" date="2013" name="Mol. Cell">
        <title>SIRT5-mediated lysine desuccinylation impacts diverse metabolic pathways.</title>
        <authorList>
            <person name="Park J."/>
            <person name="Chen Y."/>
            <person name="Tishkoff D.X."/>
            <person name="Peng C."/>
            <person name="Tan M."/>
            <person name="Dai L."/>
            <person name="Xie Z."/>
            <person name="Zhang Y."/>
            <person name="Zwaans B.M."/>
            <person name="Skinner M.E."/>
            <person name="Lombard D.B."/>
            <person name="Zhao Y."/>
        </authorList>
    </citation>
    <scope>ACETYLATION [LARGE SCALE ANALYSIS] AT LYS-486</scope>
    <scope>IDENTIFICATION BY MASS SPECTROMETRY [LARGE SCALE ANALYSIS]</scope>
    <source>
        <tissue>Embryonic fibroblast</tissue>
    </source>
</reference>
<reference key="25">
    <citation type="journal article" date="2016" name="Sci. Rep.">
        <title>A transducible nuclear/nucleolar protein, mLLP, regulates neuronal morphogenesis and synaptic transmission.</title>
        <authorList>
            <person name="Yu N.K."/>
            <person name="Kim H.F."/>
            <person name="Shim J."/>
            <person name="Kim S."/>
            <person name="Kim D.W."/>
            <person name="Kwak C."/>
            <person name="Sim S.E."/>
            <person name="Choi J.H."/>
            <person name="Ahn S."/>
            <person name="Yoo J."/>
            <person name="Choi S.L."/>
            <person name="Jang D.J."/>
            <person name="Lim C.S."/>
            <person name="Lee Y.S."/>
            <person name="Kang C."/>
            <person name="Choi S.Y."/>
            <person name="Kaang B.K."/>
        </authorList>
    </citation>
    <scope>INTERACTION WITH LLPH</scope>
</reference>
<gene>
    <name type="primary">Myo1c</name>
</gene>
<comment type="function">
    <text evidence="16">Myosins are actin-based motor molecules with ATPase activity. Unconventional myosins serve in intracellular movements. Their highly divergent tails bind to membranous compartments, which then are moved relative to actin filaments. Involved in glucose transporter recycling in response to insulin by regulating movement of intracellular GLUT4-containing vesicles to the plasma membrane. Component of the hair cell's (the sensory cells of the inner ear) adaptation-motor complex. Acts as a mediator of adaptation of mechanoelectrical transduction in stereocilia of vestibular hair cells. Binds phosphoinositides and links the actin cytoskeleton to cellular membranes.</text>
</comment>
<comment type="function">
    <molecule>Isoform 3</molecule>
    <text evidence="13">Involved in regulation of transcription. Associated with transcriptional active ribosomal genes. Appears to cooperate with the WICH chromatin-remodeling complex to facilitate transcription. Necessary for the formation of the first phosphodiester bond during transcription initiation.</text>
</comment>
<comment type="subunit">
    <text evidence="2 8 10 13 15 17 18 19">Interacts (via its IQ motifs) with CABP1 and CIB1; the interaction with CABP1 and CIB1 is calcium-dependent (PubMed:17994197). Interacts (via tail domain) with PLEKHB1 (via PH domain); the interaction is not affected by the presence or absence of calcium and CALM (PubMed:15976448). Interacts with POLR1A (PubMed:16514417). Interacts with POLR2A (PubMed:11030652, PubMed:16960872). Component of the B-WICH complex, at least composed of SMARCA5/SNF2H, BAZ1B/WSTF, SF3B1, DEK, MYO1C, ERCC6, MYBBP1A and DDX21 (PubMed:16514417). Interacts (via its IQ motifs) with CALM; this precludes interaction with YWHAB (By similarity). Interacts with YWHAB; this precludes interaction with CALM (By similarity). Interacts with RPS6 (By similarity). Interacts with actin (By similarity). Interacts with LLPH (PubMed:26961175). Interacts with GLUT4 (PubMed:22918957). Interacts (via its IQ motifs) with SH3BGRL3; the interaction is dependent on calcium and takes place at membrane ruffles (By similarity).</text>
</comment>
<comment type="interaction">
    <interactant intactId="EBI-777558">
        <id>Q9WTI7</id>
    </interactant>
    <interactant intactId="EBI-1127141">
        <id>Q9QYE9-1</id>
        <label>Plekhb1</label>
    </interactant>
    <organismsDiffer>false</organismsDiffer>
    <experiments>4</experiments>
</comment>
<comment type="interaction">
    <interactant intactId="EBI-777558">
        <id>Q9WTI7</id>
    </interactant>
    <interactant intactId="EBI-1127145">
        <id>Q9QYE9-2</id>
        <label>Plekhb1</label>
    </interactant>
    <organismsDiffer>false</organismsDiffer>
    <experiments>2</experiments>
</comment>
<comment type="interaction">
    <interactant intactId="EBI-16129068">
        <id>Q9WTI7-2</id>
    </interactant>
    <interactant intactId="EBI-397435">
        <id>P62158</id>
        <label>CALM3</label>
    </interactant>
    <organismsDiffer>true</organismsDiffer>
    <experiments>9</experiments>
</comment>
<comment type="subcellular location">
    <subcellularLocation>
        <location evidence="8 9 12">Cytoplasm</location>
    </subcellularLocation>
    <subcellularLocation>
        <location evidence="2">Nucleus</location>
    </subcellularLocation>
    <subcellularLocation>
        <location evidence="9 12 17">Cytoplasm</location>
        <location evidence="9 12 17">Cell cortex</location>
    </subcellularLocation>
    <subcellularLocation>
        <location evidence="4">Cell projection</location>
        <location evidence="4">Stereocilium membrane</location>
    </subcellularLocation>
    <subcellularLocation>
        <location evidence="18">Cytoplasmic vesicle</location>
    </subcellularLocation>
    <subcellularLocation>
        <location evidence="17 18">Cell projection</location>
        <location evidence="17 18">Ruffle membrane</location>
    </subcellularLocation>
    <text evidence="2 9 12 17 18">Colocalizes with CABP1 and CIB1 at cell margin, membrane ruffles and punctate regions on the cell membrane (PubMed:17994197). Colocalizes in adipocytes with GLUT4 at actin-based membranes (PubMed:12490950). Colocalizes with GLUT4 at insulin-induced ruffles at the cell membrane (PubMed:22918957). Localizes transiently at cell membrane to region known to be enriched in PIP2 (PubMed:16492791). Activation of phospholipase C results in its redistribution to the cytoplasm (PubMed:16492791). Colocalizes with RNA polymerase II (By similarity). Translocates to nuclear speckles upon exposure to inhibitors of RNA polymerase II transcription (By similarity).</text>
</comment>
<comment type="subcellular location">
    <molecule>Isoform 3</molecule>
    <subcellularLocation>
        <location evidence="8 13 27">Nucleus</location>
        <location evidence="8 13 27">Nucleolus</location>
    </subcellularLocation>
    <subcellularLocation>
        <location evidence="13">Nucleus</location>
        <location evidence="13">Nucleoplasm</location>
    </subcellularLocation>
    <text evidence="2 8 13">Colocalizes with RNA polymerase II in the nucleus (PubMed:11030652). Colocalizes with RNA polymerase I in nucleoli (PubMed:16514417). In the nucleolus, is localized predominantly in dense fibrillar component (DFC) and in granular component (GC) (By similarity). Accumulates strongly in DFC and GC during activation of transcription (By similarity). Colocalizes with transcription sites (PubMed:16514417). Colocalizes in the granular cortex at the periphery of the nucleolus with RPS6 (By similarity). Colocalizes in nucleoplasm with RPS6 and actin that are in contact with RNP particles (By similarity). Colocalizes with RPS6 at the nuclear pore level (By similarity).</text>
</comment>
<comment type="alternative products">
    <event type="alternative splicing"/>
    <isoform>
        <id>Q9WTI7-1</id>
        <name>1</name>
        <sequence type="displayed"/>
    </isoform>
    <isoform>
        <id>Q9WTI7-2</id>
        <name>2</name>
        <name>A</name>
        <sequence type="described" ref="VSP_036863"/>
    </isoform>
    <isoform>
        <id>Q9WTI7-3</id>
        <name>3</name>
        <name>Nuclear myosin 1</name>
        <name>NM1</name>
        <sequence type="described" ref="VSP_036864"/>
    </isoform>
    <isoform>
        <id>Q9WTI7-4</id>
        <name>4</name>
        <name>B</name>
        <sequence type="described" ref="VSP_003350"/>
    </isoform>
</comment>
<comment type="tissue specificity">
    <text evidence="9 11 14 20">Isoform 3 is expressed in small intestine, pancreas, brain, kidney, skin, heart muscle, testis, striated muscle, spleen, liver and lung (at protein level). Expressed in brain, testis, adrenal glands, thymus, spleen, kidney, lung, heart, cochlea and vestibule. Expressed in sensory hair cells of the inner ear. Expressed in adipocytes.</text>
</comment>
<comment type="induction">
    <text evidence="14">Up-regulated by serum.</text>
</comment>
<comment type="domain">
    <text evidence="16">Binds directly to large unilamellar vesicles (LUVs) containing phosphatidylinositol 4,5-bisphosphate (PIP2) or inositol 1,4,5-trisphosphate (InsP3). The PIP2-binding site corresponds to the myosin tail domain (PH-like) present in its tail domain.</text>
</comment>
<comment type="PTM">
    <text evidence="1">Isoform 2 contains a N-acetylmethionine at position 1.</text>
</comment>
<comment type="miscellaneous">
    <molecule>Isoform 4</molecule>
    <text evidence="26">May be due to a frameshift.</text>
</comment>
<comment type="similarity">
    <text evidence="26">Belongs to the TRAFAC class myosin-kinesin ATPase superfamily. Myosin family.</text>
</comment>
<comment type="caution">
    <text evidence="26">Represents an unconventional myosin. This protein should not be confused with the conventional myosin-1 (MYH1).</text>
</comment>
<keyword id="KW-0002">3D-structure</keyword>
<keyword id="KW-0007">Acetylation</keyword>
<keyword id="KW-0009">Actin-binding</keyword>
<keyword id="KW-0025">Alternative splicing</keyword>
<keyword id="KW-0067">ATP-binding</keyword>
<keyword id="KW-0112">Calmodulin-binding</keyword>
<keyword id="KW-1003">Cell membrane</keyword>
<keyword id="KW-0966">Cell projection</keyword>
<keyword id="KW-0963">Cytoplasm</keyword>
<keyword id="KW-0968">Cytoplasmic vesicle</keyword>
<keyword id="KW-0472">Membrane</keyword>
<keyword id="KW-0488">Methylation</keyword>
<keyword id="KW-0505">Motor protein</keyword>
<keyword id="KW-0518">Myosin</keyword>
<keyword id="KW-0547">Nucleotide-binding</keyword>
<keyword id="KW-0539">Nucleus</keyword>
<keyword id="KW-0597">Phosphoprotein</keyword>
<keyword id="KW-1185">Reference proteome</keyword>
<keyword id="KW-0677">Repeat</keyword>
<evidence type="ECO:0000250" key="1"/>
<evidence type="ECO:0000250" key="2">
    <source>
        <dbReference type="UniProtKB" id="O00159"/>
    </source>
</evidence>
<evidence type="ECO:0000250" key="3">
    <source>
        <dbReference type="UniProtKB" id="Q63355"/>
    </source>
</evidence>
<evidence type="ECO:0000250" key="4">
    <source>
        <dbReference type="UniProtKB" id="Q92002"/>
    </source>
</evidence>
<evidence type="ECO:0000255" key="5">
    <source>
        <dbReference type="PROSITE-ProRule" id="PRU00116"/>
    </source>
</evidence>
<evidence type="ECO:0000255" key="6">
    <source>
        <dbReference type="PROSITE-ProRule" id="PRU00782"/>
    </source>
</evidence>
<evidence type="ECO:0000255" key="7">
    <source>
        <dbReference type="PROSITE-ProRule" id="PRU01093"/>
    </source>
</evidence>
<evidence type="ECO:0000269" key="8">
    <source>
    </source>
</evidence>
<evidence type="ECO:0000269" key="9">
    <source>
    </source>
</evidence>
<evidence type="ECO:0000269" key="10">
    <source>
    </source>
</evidence>
<evidence type="ECO:0000269" key="11">
    <source>
    </source>
</evidence>
<evidence type="ECO:0000269" key="12">
    <source>
    </source>
</evidence>
<evidence type="ECO:0000269" key="13">
    <source>
    </source>
</evidence>
<evidence type="ECO:0000269" key="14">
    <source>
    </source>
</evidence>
<evidence type="ECO:0000269" key="15">
    <source>
    </source>
</evidence>
<evidence type="ECO:0000269" key="16">
    <source>
    </source>
</evidence>
<evidence type="ECO:0000269" key="17">
    <source>
    </source>
</evidence>
<evidence type="ECO:0000269" key="18">
    <source>
    </source>
</evidence>
<evidence type="ECO:0000269" key="19">
    <source>
    </source>
</evidence>
<evidence type="ECO:0000269" key="20">
    <source>
    </source>
</evidence>
<evidence type="ECO:0000303" key="21">
    <source>
    </source>
</evidence>
<evidence type="ECO:0000303" key="22">
    <source>
    </source>
</evidence>
<evidence type="ECO:0000303" key="23">
    <source>
    </source>
</evidence>
<evidence type="ECO:0000303" key="24">
    <source>
    </source>
</evidence>
<evidence type="ECO:0000303" key="25">
    <source>
    </source>
</evidence>
<evidence type="ECO:0000305" key="26"/>
<evidence type="ECO:0000305" key="27">
    <source>
    </source>
</evidence>
<evidence type="ECO:0007744" key="28">
    <source>
    </source>
</evidence>
<evidence type="ECO:0007744" key="29">
    <source>
    </source>
</evidence>
<organism>
    <name type="scientific">Mus musculus</name>
    <name type="common">Mouse</name>
    <dbReference type="NCBI Taxonomy" id="10090"/>
    <lineage>
        <taxon>Eukaryota</taxon>
        <taxon>Metazoa</taxon>
        <taxon>Chordata</taxon>
        <taxon>Craniata</taxon>
        <taxon>Vertebrata</taxon>
        <taxon>Euteleostomi</taxon>
        <taxon>Mammalia</taxon>
        <taxon>Eutheria</taxon>
        <taxon>Euarchontoglires</taxon>
        <taxon>Glires</taxon>
        <taxon>Rodentia</taxon>
        <taxon>Myomorpha</taxon>
        <taxon>Muroidea</taxon>
        <taxon>Muridae</taxon>
        <taxon>Murinae</taxon>
        <taxon>Mus</taxon>
        <taxon>Mus</taxon>
    </lineage>
</organism>
<proteinExistence type="evidence at protein level"/>
<feature type="chain" id="PRO_0000123446" description="Unconventional myosin-Ic">
    <location>
        <begin position="1"/>
        <end position="1063"/>
    </location>
</feature>
<feature type="domain" description="Myosin motor" evidence="6">
    <location>
        <begin position="47"/>
        <end position="731"/>
    </location>
</feature>
<feature type="domain" description="IQ 1" evidence="5">
    <location>
        <begin position="734"/>
        <end position="757"/>
    </location>
</feature>
<feature type="domain" description="IQ 2" evidence="5">
    <location>
        <begin position="758"/>
        <end position="786"/>
    </location>
</feature>
<feature type="domain" description="TH1" evidence="7">
    <location>
        <begin position="885"/>
        <end position="1059"/>
    </location>
</feature>
<feature type="region of interest" description="Actin-binding" evidence="6">
    <location>
        <begin position="608"/>
        <end position="630"/>
    </location>
</feature>
<feature type="binding site" evidence="1">
    <location>
        <position position="88"/>
    </location>
    <ligand>
        <name>ATP</name>
        <dbReference type="ChEBI" id="CHEBI:30616"/>
    </ligand>
</feature>
<feature type="binding site" evidence="1">
    <location>
        <position position="96"/>
    </location>
    <ligand>
        <name>ATP</name>
        <dbReference type="ChEBI" id="CHEBI:30616"/>
    </ligand>
</feature>
<feature type="binding site" evidence="1">
    <location>
        <begin position="139"/>
        <end position="148"/>
    </location>
    <ligand>
        <name>ATP</name>
        <dbReference type="ChEBI" id="CHEBI:30616"/>
    </ligand>
</feature>
<feature type="binding site" evidence="1">
    <location>
        <begin position="192"/>
        <end position="196"/>
    </location>
    <ligand>
        <name>ATP</name>
        <dbReference type="ChEBI" id="CHEBI:30616"/>
    </ligand>
</feature>
<feature type="modified residue" description="N6-methyllysine" evidence="2">
    <location>
        <position position="383"/>
    </location>
</feature>
<feature type="modified residue" description="Phosphoserine" evidence="2">
    <location>
        <position position="408"/>
    </location>
</feature>
<feature type="modified residue" description="N6-acetyllysine" evidence="29">
    <location>
        <position position="486"/>
    </location>
</feature>
<feature type="modified residue" description="Phosphoserine" evidence="3">
    <location>
        <position position="536"/>
    </location>
</feature>
<feature type="modified residue" description="Phosphoserine" evidence="3">
    <location>
        <position position="864"/>
    </location>
</feature>
<feature type="modified residue" description="Phosphoserine" evidence="3">
    <location>
        <position position="1041"/>
    </location>
</feature>
<feature type="splice variant" id="VSP_036863" description="In isoform 2." evidence="22 23 24 25">
    <location>
        <begin position="1"/>
        <end position="35"/>
    </location>
</feature>
<feature type="splice variant" id="VSP_036864" description="In isoform 3." evidence="21 23">
    <original>MALQVELIPTGEIIRVVHPHRPCKL</original>
    <variation>MRYRAS</variation>
    <location>
        <begin position="1"/>
        <end position="25"/>
    </location>
</feature>
<feature type="splice variant" id="VSP_003350" description="In isoform 4." evidence="25">
    <original>GYKPRPRQLLLTPSAVVIVEDAKVKQRIDYANLTGISVSSLSDSLFVLHVQREDNKQKGDVVLQSDHVIETLTKTALSADRVNNININQGSITFAGGPGRDGIIDFTSGSELLITKAKNGHLAVVAPRLNSR</original>
    <variation>VTSLAPGSCCSRPVLWSLWRMLKSSRELIMPT</variation>
    <location>
        <begin position="932"/>
        <end position="1063"/>
    </location>
</feature>
<feature type="mutagenesis site" description="Inhibits binding to PIP2 and disrupts membrane binding." evidence="16">
    <original>K</original>
    <variation>A</variation>
    <location>
        <position position="927"/>
    </location>
</feature>
<feature type="mutagenesis site" description="Inhibits binding to PIP2 and disrupts membrane binding." evidence="16">
    <original>R</original>
    <variation>A</variation>
    <location>
        <position position="938"/>
    </location>
</feature>
<feature type="sequence conflict" description="In Ref. 7; CAA67956." evidence="26" ref="7">
    <original>RR</original>
    <variation>GG</variation>
    <location>
        <begin position="69"/>
        <end position="70"/>
    </location>
</feature>
<feature type="sequence conflict" description="In Ref. 7; CAA67956." evidence="26" ref="7">
    <original>SRQ</original>
    <variation>RRK</variation>
    <location>
        <begin position="97"/>
        <end position="99"/>
    </location>
</feature>
<feature type="sequence conflict" description="In Ref. 3; BAE33311." evidence="26" ref="3">
    <original>E</original>
    <variation>G</variation>
    <location>
        <position position="102"/>
    </location>
</feature>
<feature type="sequence conflict" description="In Ref. 3; BAE33311." evidence="26" ref="3">
    <original>V</original>
    <variation>I</variation>
    <location>
        <position position="107"/>
    </location>
</feature>
<feature type="sequence conflict" description="In Ref. 9." evidence="26" ref="9">
    <original>T</original>
    <variation>A</variation>
    <location>
        <position position="251"/>
    </location>
</feature>
<feature type="sequence conflict" description="In Ref. 9." evidence="26" ref="9">
    <original>C</original>
    <variation>F</variation>
    <location>
        <position position="272"/>
    </location>
</feature>
<feature type="sequence conflict" description="In Ref. 9." evidence="26" ref="9">
    <original>VM</original>
    <variation>LL</variation>
    <location>
        <begin position="286"/>
        <end position="287"/>
    </location>
</feature>
<feature type="sequence conflict" description="In Ref. 9." evidence="26" ref="9">
    <original>R</original>
    <variation>A</variation>
    <location>
        <position position="388"/>
    </location>
</feature>
<feature type="sequence conflict" description="In Ref. 9." evidence="26" ref="9">
    <original>LAS</original>
    <variation>VPA</variation>
    <location>
        <begin position="401"/>
        <end position="403"/>
    </location>
</feature>
<feature type="sequence conflict" description="In Ref. 9." evidence="26" ref="9">
    <original>Q</original>
    <variation>R</variation>
    <location>
        <position position="446"/>
    </location>
</feature>
<feature type="sequence conflict" description="In Ref. 9." evidence="26" ref="9">
    <original>VKP</original>
    <variation>IKH</variation>
    <location>
        <begin position="517"/>
        <end position="519"/>
    </location>
</feature>
<feature type="sequence conflict" description="In Ref. 9." evidence="26" ref="9">
    <original>M</original>
    <variation>T</variation>
    <location>
        <position position="578"/>
    </location>
</feature>
<feature type="sequence conflict" description="In Ref. 9." evidence="26" ref="9">
    <original>S</original>
    <variation>G</variation>
    <location>
        <position position="607"/>
    </location>
</feature>
<feature type="sequence conflict" description="In Ref. 7; CAA67956." evidence="26" ref="7">
    <original>Q</original>
    <variation>R</variation>
    <location>
        <position position="735"/>
    </location>
</feature>
<feature type="sequence conflict" description="In Ref. 7; CAA67956." evidence="26" ref="7">
    <original>R</original>
    <variation>G</variation>
    <location>
        <position position="821"/>
    </location>
</feature>
<feature type="sequence conflict" description="In Ref. 7; CAA67956." evidence="26" ref="7">
    <original>E</original>
    <variation>D</variation>
    <location>
        <position position="842"/>
    </location>
</feature>
<feature type="sequence conflict" description="In Ref. 3; BAE33311." evidence="26" ref="3">
    <original>T</original>
    <variation>A</variation>
    <location>
        <position position="1024"/>
    </location>
</feature>
<feature type="modified residue" description="N-acetylmethionine" evidence="1">
    <location sequence="Q9WTI7-2">
        <position position="1"/>
    </location>
</feature>
<feature type="modified residue" description="Phosphoserine" evidence="28">
    <location sequence="Q9WTI7-3">
        <position position="10"/>
    </location>
</feature>
<name>MYO1C_MOUSE</name>
<dbReference type="EMBL" id="U96723">
    <property type="protein sequence ID" value="AAC53264.1"/>
    <property type="molecule type" value="mRNA"/>
</dbReference>
<dbReference type="EMBL" id="U96726">
    <property type="protein sequence ID" value="AAC60758.1"/>
    <property type="molecule type" value="Genomic_DNA"/>
</dbReference>
<dbReference type="EMBL" id="AY007255">
    <property type="protein sequence ID" value="AAG02570.1"/>
    <property type="molecule type" value="mRNA"/>
</dbReference>
<dbReference type="EMBL" id="AK004743">
    <property type="protein sequence ID" value="BAB23524.1"/>
    <property type="molecule type" value="mRNA"/>
</dbReference>
<dbReference type="EMBL" id="AK154294">
    <property type="protein sequence ID" value="BAE32495.1"/>
    <property type="molecule type" value="mRNA"/>
</dbReference>
<dbReference type="EMBL" id="AK155530">
    <property type="protein sequence ID" value="BAE33311.1"/>
    <property type="molecule type" value="mRNA"/>
</dbReference>
<dbReference type="EMBL" id="AK171107">
    <property type="protein sequence ID" value="BAE42253.1"/>
    <property type="molecule type" value="mRNA"/>
</dbReference>
<dbReference type="EMBL" id="AL591440">
    <property type="status" value="NOT_ANNOTATED_CDS"/>
    <property type="molecule type" value="Genomic_DNA"/>
</dbReference>
<dbReference type="EMBL" id="CH466596">
    <property type="protein sequence ID" value="EDL12832.1"/>
    <property type="molecule type" value="Genomic_DNA"/>
</dbReference>
<dbReference type="EMBL" id="CH466596">
    <property type="protein sequence ID" value="EDL12833.1"/>
    <property type="molecule type" value="Genomic_DNA"/>
</dbReference>
<dbReference type="EMBL" id="BC021481">
    <property type="protein sequence ID" value="AAH21481.1"/>
    <property type="molecule type" value="mRNA"/>
</dbReference>
<dbReference type="EMBL" id="X99638">
    <property type="protein sequence ID" value="CAA67956.1"/>
    <property type="molecule type" value="mRNA"/>
</dbReference>
<dbReference type="EMBL" id="CF615767">
    <property type="status" value="NOT_ANNOTATED_CDS"/>
    <property type="molecule type" value="mRNA"/>
</dbReference>
<dbReference type="CCDS" id="CCDS25054.1">
    <molecule id="Q9WTI7-2"/>
</dbReference>
<dbReference type="CCDS" id="CCDS36228.1">
    <molecule id="Q9WTI7-3"/>
</dbReference>
<dbReference type="CCDS" id="CCDS88191.1">
    <molecule id="Q9WTI7-1"/>
</dbReference>
<dbReference type="PIR" id="B45438">
    <property type="entry name" value="B45438"/>
</dbReference>
<dbReference type="PIR" id="H75634">
    <property type="entry name" value="H75634"/>
</dbReference>
<dbReference type="RefSeq" id="NP_001074243.1">
    <molecule id="Q9WTI7-2"/>
    <property type="nucleotide sequence ID" value="NM_001080774.2"/>
</dbReference>
<dbReference type="RefSeq" id="NP_001074244.1">
    <molecule id="Q9WTI7-3"/>
    <property type="nucleotide sequence ID" value="NM_001080775.2"/>
</dbReference>
<dbReference type="RefSeq" id="NP_001357540.1">
    <molecule id="Q9WTI7-1"/>
    <property type="nucleotide sequence ID" value="NM_001370611.2"/>
</dbReference>
<dbReference type="RefSeq" id="NP_032685.1">
    <molecule id="Q9WTI7-2"/>
    <property type="nucleotide sequence ID" value="NM_008659.4"/>
</dbReference>
<dbReference type="RefSeq" id="XP_006532492.1">
    <property type="nucleotide sequence ID" value="XM_006532429.3"/>
</dbReference>
<dbReference type="PDB" id="4R8G">
    <property type="method" value="X-ray"/>
    <property type="resolution" value="3.50 A"/>
    <property type="chains" value="E=733-1063"/>
</dbReference>
<dbReference type="PDB" id="9CFU">
    <property type="method" value="EM"/>
    <property type="resolution" value="2.80 A"/>
    <property type="chains" value="P=36-755"/>
</dbReference>
<dbReference type="PDB" id="9CFV">
    <property type="method" value="EM"/>
    <property type="resolution" value="2.70 A"/>
    <property type="chains" value="P=36-755"/>
</dbReference>
<dbReference type="PDB" id="9CFW">
    <property type="method" value="EM"/>
    <property type="resolution" value="3.00 A"/>
    <property type="chains" value="P=36-755"/>
</dbReference>
<dbReference type="PDB" id="9CFX">
    <property type="method" value="EM"/>
    <property type="resolution" value="2.70 A"/>
    <property type="chains" value="P=36-755"/>
</dbReference>
<dbReference type="PDBsum" id="4R8G"/>
<dbReference type="PDBsum" id="9CFU"/>
<dbReference type="PDBsum" id="9CFV"/>
<dbReference type="PDBsum" id="9CFW"/>
<dbReference type="PDBsum" id="9CFX"/>
<dbReference type="EMDB" id="EMD-45563"/>
<dbReference type="EMDB" id="EMD-45564"/>
<dbReference type="EMDB" id="EMD-45565"/>
<dbReference type="EMDB" id="EMD-45566"/>
<dbReference type="SMR" id="Q9WTI7"/>
<dbReference type="BioGRID" id="201664">
    <property type="interactions" value="155"/>
</dbReference>
<dbReference type="ComplexPortal" id="CPX-1133">
    <molecule id="Q9WTI7-3"/>
    <property type="entry name" value="B-WICH chromatin remodelling complex"/>
</dbReference>
<dbReference type="CORUM" id="Q9WTI7"/>
<dbReference type="DIP" id="DIP-35498N"/>
<dbReference type="FunCoup" id="Q9WTI7">
    <property type="interactions" value="964"/>
</dbReference>
<dbReference type="IntAct" id="Q9WTI7">
    <property type="interactions" value="148"/>
</dbReference>
<dbReference type="MINT" id="Q9WTI7"/>
<dbReference type="STRING" id="10090.ENSMUSP00000104069"/>
<dbReference type="GlyGen" id="Q9WTI7">
    <property type="glycosylation" value="3 sites, 1 O-linked glycan (2 sites)"/>
</dbReference>
<dbReference type="iPTMnet" id="Q9WTI7"/>
<dbReference type="PhosphoSitePlus" id="Q9WTI7"/>
<dbReference type="SwissPalm" id="Q9WTI7"/>
<dbReference type="jPOST" id="Q9WTI7"/>
<dbReference type="PaxDb" id="10090-ENSMUSP00000104069"/>
<dbReference type="PeptideAtlas" id="Q9WTI7"/>
<dbReference type="ProteomicsDB" id="286126">
    <molecule id="Q9WTI7-1"/>
</dbReference>
<dbReference type="ProteomicsDB" id="286127">
    <molecule id="Q9WTI7-2"/>
</dbReference>
<dbReference type="ProteomicsDB" id="286128">
    <molecule id="Q9WTI7-3"/>
</dbReference>
<dbReference type="ProteomicsDB" id="286129">
    <molecule id="Q9WTI7-4"/>
</dbReference>
<dbReference type="Pumba" id="Q9WTI7"/>
<dbReference type="Antibodypedia" id="953">
    <property type="antibodies" value="173 antibodies from 26 providers"/>
</dbReference>
<dbReference type="DNASU" id="17913"/>
<dbReference type="Ensembl" id="ENSMUST00000069057.13">
    <molecule id="Q9WTI7-2"/>
    <property type="protein sequence ID" value="ENSMUSP00000070388.7"/>
    <property type="gene ID" value="ENSMUSG00000017774.20"/>
</dbReference>
<dbReference type="Ensembl" id="ENSMUST00000102504.10">
    <molecule id="Q9WTI7-2"/>
    <property type="protein sequence ID" value="ENSMUSP00000099562.4"/>
    <property type="gene ID" value="ENSMUSG00000017774.20"/>
</dbReference>
<dbReference type="Ensembl" id="ENSMUST00000102505.10">
    <molecule id="Q9WTI7-1"/>
    <property type="protein sequence ID" value="ENSMUSP00000099563.4"/>
    <property type="gene ID" value="ENSMUSG00000017774.20"/>
</dbReference>
<dbReference type="Ensembl" id="ENSMUST00000108431.3">
    <molecule id="Q9WTI7-3"/>
    <property type="protein sequence ID" value="ENSMUSP00000104069.3"/>
    <property type="gene ID" value="ENSMUSG00000017774.20"/>
</dbReference>
<dbReference type="GeneID" id="17913"/>
<dbReference type="KEGG" id="mmu:17913"/>
<dbReference type="UCSC" id="uc007kem.1">
    <molecule id="Q9WTI7-1"/>
    <property type="organism name" value="mouse"/>
</dbReference>
<dbReference type="UCSC" id="uc007keo.1">
    <molecule id="Q9WTI7-3"/>
    <property type="organism name" value="mouse"/>
</dbReference>
<dbReference type="AGR" id="MGI:106612"/>
<dbReference type="CTD" id="4641"/>
<dbReference type="MGI" id="MGI:106612">
    <property type="gene designation" value="Myo1c"/>
</dbReference>
<dbReference type="VEuPathDB" id="HostDB:ENSMUSG00000017774"/>
<dbReference type="eggNOG" id="KOG0164">
    <property type="taxonomic scope" value="Eukaryota"/>
</dbReference>
<dbReference type="GeneTree" id="ENSGT00940000157915"/>
<dbReference type="HOGENOM" id="CLU_000192_7_7_1"/>
<dbReference type="InParanoid" id="Q9WTI7"/>
<dbReference type="OrthoDB" id="6108017at2759"/>
<dbReference type="PhylomeDB" id="Q9WTI7"/>
<dbReference type="TreeFam" id="TF312960"/>
<dbReference type="Reactome" id="R-MMU-2029482">
    <property type="pathway name" value="Regulation of actin dynamics for phagocytic cup formation"/>
</dbReference>
<dbReference type="Reactome" id="R-MMU-5250924">
    <property type="pathway name" value="B-WICH complex positively regulates rRNA expression"/>
</dbReference>
<dbReference type="BioGRID-ORCS" id="17913">
    <property type="hits" value="3 hits in 80 CRISPR screens"/>
</dbReference>
<dbReference type="CD-CODE" id="CE726F99">
    <property type="entry name" value="Postsynaptic density"/>
</dbReference>
<dbReference type="ChiTaRS" id="Myo1c">
    <property type="organism name" value="mouse"/>
</dbReference>
<dbReference type="EvolutionaryTrace" id="Q9WTI7"/>
<dbReference type="PRO" id="PR:Q9WTI7"/>
<dbReference type="Proteomes" id="UP000000589">
    <property type="component" value="Chromosome 11"/>
</dbReference>
<dbReference type="RNAct" id="Q9WTI7">
    <property type="molecule type" value="protein"/>
</dbReference>
<dbReference type="Bgee" id="ENSMUSG00000017774">
    <property type="expression patterns" value="Expressed in right lung and 256 other cell types or tissues"/>
</dbReference>
<dbReference type="ExpressionAtlas" id="Q9WTI7">
    <property type="expression patterns" value="baseline and differential"/>
</dbReference>
<dbReference type="GO" id="GO:0110016">
    <property type="term" value="C:B-WICH complex"/>
    <property type="evidence" value="ECO:0000266"/>
    <property type="project" value="ComplexPortal"/>
</dbReference>
<dbReference type="GO" id="GO:0009925">
    <property type="term" value="C:basal plasma membrane"/>
    <property type="evidence" value="ECO:0007669"/>
    <property type="project" value="Ensembl"/>
</dbReference>
<dbReference type="GO" id="GO:0005903">
    <property type="term" value="C:brush border"/>
    <property type="evidence" value="ECO:0000314"/>
    <property type="project" value="UniProtKB"/>
</dbReference>
<dbReference type="GO" id="GO:0005938">
    <property type="term" value="C:cell cortex"/>
    <property type="evidence" value="ECO:0007669"/>
    <property type="project" value="UniProtKB-SubCell"/>
</dbReference>
<dbReference type="GO" id="GO:0030659">
    <property type="term" value="C:cytoplasmic vesicle membrane"/>
    <property type="evidence" value="ECO:0000314"/>
    <property type="project" value="MGI"/>
</dbReference>
<dbReference type="GO" id="GO:0005829">
    <property type="term" value="C:cytosol"/>
    <property type="evidence" value="ECO:0000304"/>
    <property type="project" value="Reactome"/>
</dbReference>
<dbReference type="GO" id="GO:0031941">
    <property type="term" value="C:filamentous actin"/>
    <property type="evidence" value="ECO:0007669"/>
    <property type="project" value="Ensembl"/>
</dbReference>
<dbReference type="GO" id="GO:0016328">
    <property type="term" value="C:lateral plasma membrane"/>
    <property type="evidence" value="ECO:0007669"/>
    <property type="project" value="Ensembl"/>
</dbReference>
<dbReference type="GO" id="GO:0016020">
    <property type="term" value="C:membrane"/>
    <property type="evidence" value="ECO:0000304"/>
    <property type="project" value="UniProtKB"/>
</dbReference>
<dbReference type="GO" id="GO:0045121">
    <property type="term" value="C:membrane raft"/>
    <property type="evidence" value="ECO:0007669"/>
    <property type="project" value="Ensembl"/>
</dbReference>
<dbReference type="GO" id="GO:0005902">
    <property type="term" value="C:microvillus"/>
    <property type="evidence" value="ECO:0007669"/>
    <property type="project" value="Ensembl"/>
</dbReference>
<dbReference type="GO" id="GO:0016459">
    <property type="term" value="C:myosin complex"/>
    <property type="evidence" value="ECO:0007669"/>
    <property type="project" value="UniProtKB-KW"/>
</dbReference>
<dbReference type="GO" id="GO:0016604">
    <property type="term" value="C:nuclear body"/>
    <property type="evidence" value="ECO:0007669"/>
    <property type="project" value="Ensembl"/>
</dbReference>
<dbReference type="GO" id="GO:0005730">
    <property type="term" value="C:nucleolus"/>
    <property type="evidence" value="ECO:0000303"/>
    <property type="project" value="ComplexPortal"/>
</dbReference>
<dbReference type="GO" id="GO:0045335">
    <property type="term" value="C:phagocytic vesicle"/>
    <property type="evidence" value="ECO:0000314"/>
    <property type="project" value="MGI"/>
</dbReference>
<dbReference type="GO" id="GO:0005886">
    <property type="term" value="C:plasma membrane"/>
    <property type="evidence" value="ECO:0000314"/>
    <property type="project" value="MGI"/>
</dbReference>
<dbReference type="GO" id="GO:0032587">
    <property type="term" value="C:ruffle membrane"/>
    <property type="evidence" value="ECO:0007669"/>
    <property type="project" value="UniProtKB-SubCell"/>
</dbReference>
<dbReference type="GO" id="GO:0032420">
    <property type="term" value="C:stereocilium"/>
    <property type="evidence" value="ECO:0000314"/>
    <property type="project" value="MGI"/>
</dbReference>
<dbReference type="GO" id="GO:0060171">
    <property type="term" value="C:stereocilium membrane"/>
    <property type="evidence" value="ECO:0007669"/>
    <property type="project" value="UniProtKB-SubCell"/>
</dbReference>
<dbReference type="GO" id="GO:0003779">
    <property type="term" value="F:actin binding"/>
    <property type="evidence" value="ECO:0000303"/>
    <property type="project" value="UniProtKB"/>
</dbReference>
<dbReference type="GO" id="GO:0005524">
    <property type="term" value="F:ATP binding"/>
    <property type="evidence" value="ECO:0000303"/>
    <property type="project" value="UniProtKB"/>
</dbReference>
<dbReference type="GO" id="GO:0005516">
    <property type="term" value="F:calmodulin binding"/>
    <property type="evidence" value="ECO:0000303"/>
    <property type="project" value="UniProtKB"/>
</dbReference>
<dbReference type="GO" id="GO:0000146">
    <property type="term" value="F:microfilament motor activity"/>
    <property type="evidence" value="ECO:0000269"/>
    <property type="project" value="Reactome"/>
</dbReference>
<dbReference type="GO" id="GO:0005543">
    <property type="term" value="F:phospholipid binding"/>
    <property type="evidence" value="ECO:0000304"/>
    <property type="project" value="UniProtKB"/>
</dbReference>
<dbReference type="GO" id="GO:0005102">
    <property type="term" value="F:signaling receptor binding"/>
    <property type="evidence" value="ECO:0007669"/>
    <property type="project" value="Ensembl"/>
</dbReference>
<dbReference type="GO" id="GO:0031267">
    <property type="term" value="F:small GTPase binding"/>
    <property type="evidence" value="ECO:0007669"/>
    <property type="project" value="Ensembl"/>
</dbReference>
<dbReference type="GO" id="GO:0071346">
    <property type="term" value="P:cellular response to type II interferon"/>
    <property type="evidence" value="ECO:0000314"/>
    <property type="project" value="MGI"/>
</dbReference>
<dbReference type="GO" id="GO:0006338">
    <property type="term" value="P:chromatin remodeling"/>
    <property type="evidence" value="ECO:0000303"/>
    <property type="project" value="ComplexPortal"/>
</dbReference>
<dbReference type="GO" id="GO:0030335">
    <property type="term" value="P:positive regulation of cell migration"/>
    <property type="evidence" value="ECO:0007669"/>
    <property type="project" value="Ensembl"/>
</dbReference>
<dbReference type="GO" id="GO:1900078">
    <property type="term" value="P:positive regulation of cellular response to insulin stimulus"/>
    <property type="evidence" value="ECO:0000314"/>
    <property type="project" value="MGI"/>
</dbReference>
<dbReference type="GO" id="GO:0090314">
    <property type="term" value="P:positive regulation of protein targeting to membrane"/>
    <property type="evidence" value="ECO:0000314"/>
    <property type="project" value="MGI"/>
</dbReference>
<dbReference type="GO" id="GO:0045943">
    <property type="term" value="P:positive regulation of transcription by RNA polymerase I"/>
    <property type="evidence" value="ECO:0000303"/>
    <property type="project" value="ComplexPortal"/>
</dbReference>
<dbReference type="GO" id="GO:0045944">
    <property type="term" value="P:positive regulation of transcription by RNA polymerase II"/>
    <property type="evidence" value="ECO:0000303"/>
    <property type="project" value="ComplexPortal"/>
</dbReference>
<dbReference type="GO" id="GO:0045945">
    <property type="term" value="P:positive regulation of transcription by RNA polymerase III"/>
    <property type="evidence" value="ECO:0000266"/>
    <property type="project" value="ComplexPortal"/>
</dbReference>
<dbReference type="GO" id="GO:0006612">
    <property type="term" value="P:protein targeting to membrane"/>
    <property type="evidence" value="ECO:0007669"/>
    <property type="project" value="Ensembl"/>
</dbReference>
<dbReference type="GO" id="GO:2000810">
    <property type="term" value="P:regulation of bicellular tight junction assembly"/>
    <property type="evidence" value="ECO:0007669"/>
    <property type="project" value="Ensembl"/>
</dbReference>
<dbReference type="GO" id="GO:0038084">
    <property type="term" value="P:vascular endothelial growth factor signaling pathway"/>
    <property type="evidence" value="ECO:0007669"/>
    <property type="project" value="Ensembl"/>
</dbReference>
<dbReference type="GO" id="GO:0030050">
    <property type="term" value="P:vesicle transport along actin filament"/>
    <property type="evidence" value="ECO:0000314"/>
    <property type="project" value="MGI"/>
</dbReference>
<dbReference type="CDD" id="cd23766">
    <property type="entry name" value="IQCG"/>
    <property type="match status" value="1"/>
</dbReference>
<dbReference type="CDD" id="cd01378">
    <property type="entry name" value="MYSc_Myo1"/>
    <property type="match status" value="1"/>
</dbReference>
<dbReference type="FunFam" id="1.10.10.820:FF:000001">
    <property type="entry name" value="Myosin heavy chain"/>
    <property type="match status" value="1"/>
</dbReference>
<dbReference type="FunFam" id="3.40.850.10:FF:000101">
    <property type="entry name" value="Slow myosin heavy chain 2"/>
    <property type="match status" value="1"/>
</dbReference>
<dbReference type="FunFam" id="1.20.58.530:FF:000004">
    <property type="entry name" value="Unconventional myosin ID"/>
    <property type="match status" value="1"/>
</dbReference>
<dbReference type="FunFam" id="1.20.5.190:FF:000017">
    <property type="entry name" value="unconventional myosin-Ic isoform X1"/>
    <property type="match status" value="1"/>
</dbReference>
<dbReference type="FunFam" id="1.20.120.720:FF:000013">
    <property type="entry name" value="unconventional myosin-Ic isoform X2"/>
    <property type="match status" value="1"/>
</dbReference>
<dbReference type="Gene3D" id="1.10.10.820">
    <property type="match status" value="1"/>
</dbReference>
<dbReference type="Gene3D" id="1.20.5.190">
    <property type="match status" value="1"/>
</dbReference>
<dbReference type="Gene3D" id="1.20.58.530">
    <property type="match status" value="1"/>
</dbReference>
<dbReference type="Gene3D" id="6.20.240.20">
    <property type="match status" value="1"/>
</dbReference>
<dbReference type="Gene3D" id="3.40.850.10">
    <property type="entry name" value="Kinesin motor domain"/>
    <property type="match status" value="1"/>
</dbReference>
<dbReference type="Gene3D" id="1.20.120.720">
    <property type="entry name" value="Myosin VI head, motor domain, U50 subdomain"/>
    <property type="match status" value="1"/>
</dbReference>
<dbReference type="InterPro" id="IPR000048">
    <property type="entry name" value="IQ_motif_EF-hand-BS"/>
</dbReference>
<dbReference type="InterPro" id="IPR036961">
    <property type="entry name" value="Kinesin_motor_dom_sf"/>
</dbReference>
<dbReference type="InterPro" id="IPR001609">
    <property type="entry name" value="Myosin_head_motor_dom-like"/>
</dbReference>
<dbReference type="InterPro" id="IPR010926">
    <property type="entry name" value="Myosin_TH1"/>
</dbReference>
<dbReference type="InterPro" id="IPR036072">
    <property type="entry name" value="MYSc_Myo1"/>
</dbReference>
<dbReference type="InterPro" id="IPR027417">
    <property type="entry name" value="P-loop_NTPase"/>
</dbReference>
<dbReference type="PANTHER" id="PTHR13140">
    <property type="entry name" value="MYOSIN"/>
    <property type="match status" value="1"/>
</dbReference>
<dbReference type="PANTHER" id="PTHR13140:SF255">
    <property type="entry name" value="UNCONVENTIONAL MYOSIN-IC"/>
    <property type="match status" value="1"/>
</dbReference>
<dbReference type="Pfam" id="PF00612">
    <property type="entry name" value="IQ"/>
    <property type="match status" value="2"/>
</dbReference>
<dbReference type="Pfam" id="PF00063">
    <property type="entry name" value="Myosin_head"/>
    <property type="match status" value="1"/>
</dbReference>
<dbReference type="Pfam" id="PF06017">
    <property type="entry name" value="Myosin_TH1"/>
    <property type="match status" value="1"/>
</dbReference>
<dbReference type="PRINTS" id="PR00193">
    <property type="entry name" value="MYOSINHEAVY"/>
</dbReference>
<dbReference type="SMART" id="SM00015">
    <property type="entry name" value="IQ"/>
    <property type="match status" value="2"/>
</dbReference>
<dbReference type="SMART" id="SM00242">
    <property type="entry name" value="MYSc"/>
    <property type="match status" value="1"/>
</dbReference>
<dbReference type="SUPFAM" id="SSF52540">
    <property type="entry name" value="P-loop containing nucleoside triphosphate hydrolases"/>
    <property type="match status" value="1"/>
</dbReference>
<dbReference type="PROSITE" id="PS50096">
    <property type="entry name" value="IQ"/>
    <property type="match status" value="2"/>
</dbReference>
<dbReference type="PROSITE" id="PS51456">
    <property type="entry name" value="MYOSIN_MOTOR"/>
    <property type="match status" value="1"/>
</dbReference>
<dbReference type="PROSITE" id="PS51757">
    <property type="entry name" value="TH1"/>
    <property type="match status" value="1"/>
</dbReference>
<protein>
    <recommendedName>
        <fullName>Unconventional myosin-Ic</fullName>
    </recommendedName>
    <alternativeName>
        <fullName>Myosin I beta</fullName>
        <shortName>MMI-beta</shortName>
        <shortName>MMIb</shortName>
    </alternativeName>
</protein>
<sequence length="1063" mass="121944">MALQVELIPTGEIIRVVHPHRPCKLALGSDGVRVTMESALTARDRVGVQDFVLLENFTSEAAFIENLRRRFRENLIYTYIGPVLVSVNPYRDLQIYSRQHMERYRGVSFYEVPPHLFAVADTVYRALRTERRDQAVMISGESGAGKTEATKRLLQFYAETCPAPERGGAVRDRLLQSNPVLEAFGNAKTLRNDNSSRFGKYMDVQFDFKGAPVGGHILSYLLEKSRVVHQNHGERNFHVFYQLLEGGEEETLRRLGLERNPQSYLYLVKGQCAKVSSINDKSDWKVMRKALSVIDFTEDEVEDLLSIVASVLHLGNIHFAADEDSNAQVTTENQLKYLTRLLGVEGTTLREALTHRKIIAKGEELLSPLNLEQAAYARDALAKAVYSRTFTWLVRKINRSLASKDAESPSWRSTTVLGLLDIYGFEVFQHNSFEQFCINYCNEKLQQLFIELTLKSEQEEYEAEGIAWEPVQYFNNKIICDLVEEKFKGIISILDEECLRPGEATDLTFLEKLEDTVKPHPHFLTHKLADQKTRKSLDRGEFRLLHYAGEVTYSVTGFLDKNNDLLFRNLKETMCSSMNPIMAQCFDKSELSDKKRPETVATQFKMSLLQLVEILRSKEPAYIRCIKPNDAKQPGRFDEVLIRHQVKYLGLMENLRVRRAGFAYRRKYEAFLQRYKSLCPETWPMWAGRPQDGVAVLVRHLGYKPEEYKMGRTKIFIRFPKTLFATEDSLEVRRQSLATKIQAAWRGFHWRQKFLRVKRSAICIQSWWRGTLGRRKAAKRKWAAQTIRRLIRGFILRHSPRCPENAFFLDHVRASFLLNLRRQLPRNVLDTSWPTPPPALREASELLRELCMKNMVWKYCRSISPEWKQQLQQKAVASEIFKGKKDNYPQSVPRLFISTRLGTEEISPRVLQSLGSEPIQYAVPVVKYDRKGYKPRPRQLLLTPSAVVIVEDAKVKQRIDYANLTGISVSSLSDSLFVLHVQREDNKQKGDVVLQSDHVIETLTKTALSADRVNNININQGSITFAGGPGRDGIIDFTSGSELLITKAKNGHLAVVAPRLNSR</sequence>